<organism>
    <name type="scientific">Haloarcula marismortui (strain ATCC 43049 / DSM 3752 / JCM 8966 / VKM B-1809)</name>
    <name type="common">Halobacterium marismortui</name>
    <dbReference type="NCBI Taxonomy" id="272569"/>
    <lineage>
        <taxon>Archaea</taxon>
        <taxon>Methanobacteriati</taxon>
        <taxon>Methanobacteriota</taxon>
        <taxon>Stenosarchaea group</taxon>
        <taxon>Halobacteria</taxon>
        <taxon>Halobacteriales</taxon>
        <taxon>Haloarculaceae</taxon>
        <taxon>Haloarcula</taxon>
    </lineage>
</organism>
<reference key="1">
    <citation type="submission" date="2000-05" db="EMBL/GenBank/DDBJ databases">
        <title>Molecular and genetic analysis of copper-containing dissimilatory nitrite reductase from a denitrifying halophilic archaeon, Haloarcula marismortui.</title>
        <authorList>
            <person name="Ichiki H."/>
            <person name="Tanaka Y."/>
            <person name="Mochizuki K."/>
            <person name="Yoshimatsu K."/>
            <person name="Sakurai T."/>
            <person name="Fujiwara T."/>
        </authorList>
    </citation>
    <scope>NUCLEOTIDE SEQUENCE [GENOMIC DNA]</scope>
</reference>
<reference key="2">
    <citation type="journal article" date="2004" name="Genome Res.">
        <title>Genome sequence of Haloarcula marismortui: a halophilic archaeon from the Dead Sea.</title>
        <authorList>
            <person name="Baliga N.S."/>
            <person name="Bonneau R."/>
            <person name="Facciotti M.T."/>
            <person name="Pan M."/>
            <person name="Glusman G."/>
            <person name="Deutsch E.W."/>
            <person name="Shannon P."/>
            <person name="Chiu Y."/>
            <person name="Weng R.S."/>
            <person name="Gan R.R."/>
            <person name="Hung P."/>
            <person name="Date S.V."/>
            <person name="Marcotte E."/>
            <person name="Hood L."/>
            <person name="Ng W.V."/>
        </authorList>
    </citation>
    <scope>NUCLEOTIDE SEQUENCE [LARGE SCALE GENOMIC DNA]</scope>
    <source>
        <strain>ATCC 43049 / DSM 3752 / JCM 8966 / VKM B-1809</strain>
    </source>
</reference>
<gene>
    <name evidence="1" type="primary">pcn</name>
    <name type="synonym">pcnA</name>
    <name type="ordered locus">rrnAC2851</name>
</gene>
<keyword id="KW-0235">DNA replication</keyword>
<keyword id="KW-0238">DNA-binding</keyword>
<keyword id="KW-1185">Reference proteome</keyword>
<name>PCNA_HALMA</name>
<accession>Q9P9H8</accession>
<accession>Q5UYQ1</accession>
<evidence type="ECO:0000255" key="1">
    <source>
        <dbReference type="HAMAP-Rule" id="MF_00317"/>
    </source>
</evidence>
<evidence type="ECO:0000305" key="2"/>
<protein>
    <recommendedName>
        <fullName evidence="1">DNA polymerase sliding clamp</fullName>
    </recommendedName>
    <alternativeName>
        <fullName evidence="1">Proliferating cell nuclear antigen homolog</fullName>
        <shortName evidence="1">PCNA</shortName>
    </alternativeName>
</protein>
<dbReference type="EMBL" id="AJ278286">
    <property type="protein sequence ID" value="CAB93143.1"/>
    <property type="status" value="ALT_INIT"/>
    <property type="molecule type" value="Genomic_DNA"/>
</dbReference>
<dbReference type="EMBL" id="AY596297">
    <property type="protein sequence ID" value="AAV47602.1"/>
    <property type="status" value="ALT_INIT"/>
    <property type="molecule type" value="Genomic_DNA"/>
</dbReference>
<dbReference type="RefSeq" id="WP_007187874.1">
    <property type="nucleotide sequence ID" value="NZ_CP039138.1"/>
</dbReference>
<dbReference type="SMR" id="Q9P9H8"/>
<dbReference type="STRING" id="272569.rrnAC2851"/>
<dbReference type="PaxDb" id="272569-rrnAC2851"/>
<dbReference type="EnsemblBacteria" id="AAV47602">
    <property type="protein sequence ID" value="AAV47602"/>
    <property type="gene ID" value="rrnAC2851"/>
</dbReference>
<dbReference type="KEGG" id="hma:rrnAC2851"/>
<dbReference type="PATRIC" id="fig|272569.17.peg.3422"/>
<dbReference type="eggNOG" id="arCOG00488">
    <property type="taxonomic scope" value="Archaea"/>
</dbReference>
<dbReference type="HOGENOM" id="CLU_043978_1_1_2"/>
<dbReference type="Proteomes" id="UP000001169">
    <property type="component" value="Chromosome I"/>
</dbReference>
<dbReference type="GO" id="GO:0003677">
    <property type="term" value="F:DNA binding"/>
    <property type="evidence" value="ECO:0007669"/>
    <property type="project" value="UniProtKB-UniRule"/>
</dbReference>
<dbReference type="GO" id="GO:0030337">
    <property type="term" value="F:DNA polymerase processivity factor activity"/>
    <property type="evidence" value="ECO:0007669"/>
    <property type="project" value="UniProtKB-UniRule"/>
</dbReference>
<dbReference type="GO" id="GO:0006272">
    <property type="term" value="P:leading strand elongation"/>
    <property type="evidence" value="ECO:0007669"/>
    <property type="project" value="TreeGrafter"/>
</dbReference>
<dbReference type="GO" id="GO:0006275">
    <property type="term" value="P:regulation of DNA replication"/>
    <property type="evidence" value="ECO:0007669"/>
    <property type="project" value="UniProtKB-UniRule"/>
</dbReference>
<dbReference type="CDD" id="cd00577">
    <property type="entry name" value="PCNA"/>
    <property type="match status" value="1"/>
</dbReference>
<dbReference type="Gene3D" id="3.70.10.10">
    <property type="match status" value="1"/>
</dbReference>
<dbReference type="HAMAP" id="MF_00317">
    <property type="entry name" value="DNApol_clamp_arch"/>
    <property type="match status" value="1"/>
</dbReference>
<dbReference type="InterPro" id="IPR046938">
    <property type="entry name" value="DNA_clamp_sf"/>
</dbReference>
<dbReference type="InterPro" id="IPR000730">
    <property type="entry name" value="Pr_cel_nuc_antig"/>
</dbReference>
<dbReference type="InterPro" id="IPR022659">
    <property type="entry name" value="Pr_cel_nuc_antig_CS"/>
</dbReference>
<dbReference type="InterPro" id="IPR022648">
    <property type="entry name" value="Pr_cel_nuc_antig_N"/>
</dbReference>
<dbReference type="NCBIfam" id="NF002222">
    <property type="entry name" value="PRK01115.1-5"/>
    <property type="match status" value="1"/>
</dbReference>
<dbReference type="PANTHER" id="PTHR11352">
    <property type="entry name" value="PROLIFERATING CELL NUCLEAR ANTIGEN"/>
    <property type="match status" value="1"/>
</dbReference>
<dbReference type="PANTHER" id="PTHR11352:SF0">
    <property type="entry name" value="PROLIFERATING CELL NUCLEAR ANTIGEN"/>
    <property type="match status" value="1"/>
</dbReference>
<dbReference type="Pfam" id="PF00705">
    <property type="entry name" value="PCNA_N"/>
    <property type="match status" value="1"/>
</dbReference>
<dbReference type="PRINTS" id="PR00339">
    <property type="entry name" value="PCNACYCLIN"/>
</dbReference>
<dbReference type="SUPFAM" id="SSF55979">
    <property type="entry name" value="DNA clamp"/>
    <property type="match status" value="1"/>
</dbReference>
<dbReference type="PROSITE" id="PS01251">
    <property type="entry name" value="PCNA_1"/>
    <property type="match status" value="1"/>
</dbReference>
<comment type="function">
    <text evidence="1">Sliding clamp subunit that acts as a moving platform for DNA processing. Responsible for tethering the catalytic subunit of DNA polymerase and other proteins to DNA during high-speed replication.</text>
</comment>
<comment type="subunit">
    <text evidence="1">Homotrimer. The subunits circularize to form a toroid; DNA passes through its center. Replication factor C (RFC) is required to load the toroid on the DNA.</text>
</comment>
<comment type="similarity">
    <text evidence="1">Belongs to the PCNA family.</text>
</comment>
<comment type="sequence caution" evidence="2">
    <conflict type="erroneous initiation">
        <sequence resource="EMBL-CDS" id="AAV47602"/>
    </conflict>
    <text>Extended N-terminus.</text>
</comment>
<comment type="sequence caution" evidence="2">
    <conflict type="erroneous initiation">
        <sequence resource="EMBL-CDS" id="CAB93143"/>
    </conflict>
    <text>Extended N-terminus.</text>
</comment>
<sequence length="247" mass="27060">MFNAIVSADTLQATLDSVSVLVDECKIHLEEDGLEIRAVDPANVGMVDLRLDAAAFESYETDGGLIGVNLSRLEDIAGMADAGQLVHLDLDEETRKLHISIDGLEYTLALIDPDSIRQEPDLPDLDLSANIVIEGKDIDRSVTAADMVSDHIALGVDATDELFYVDAEGDTDDVHLELTRDDLIDLTPGDAHSLFSLDYLKNMNKAIPKDAEVEMELGEEFPVKMHFSFAEGQGRVTYMLAPRIQSE</sequence>
<proteinExistence type="inferred from homology"/>
<feature type="chain" id="PRO_0000149193" description="DNA polymerase sliding clamp">
    <location>
        <begin position="1"/>
        <end position="247"/>
    </location>
</feature>